<dbReference type="EMBL" id="AY083305">
    <property type="protein sequence ID" value="AAL89787.1"/>
    <property type="molecule type" value="mRNA"/>
</dbReference>
<dbReference type="EMBL" id="FM179284">
    <property type="protein sequence ID" value="CAQ76893.1"/>
    <property type="molecule type" value="mRNA"/>
</dbReference>
<dbReference type="EMBL" id="AC024329">
    <property type="status" value="NOT_ANNOTATED_CDS"/>
    <property type="molecule type" value="Genomic_DNA"/>
</dbReference>
<dbReference type="EMBL" id="AC087361">
    <property type="status" value="NOT_ANNOTATED_CDS"/>
    <property type="molecule type" value="Genomic_DNA"/>
</dbReference>
<dbReference type="EMBL" id="BC008226">
    <property type="protein sequence ID" value="AAH08226.1"/>
    <property type="molecule type" value="mRNA"/>
</dbReference>
<dbReference type="CCDS" id="CCDS6323.1">
    <molecule id="Q96HR3-1"/>
</dbReference>
<dbReference type="CCDS" id="CCDS64959.1">
    <molecule id="Q96HR3-2"/>
</dbReference>
<dbReference type="RefSeq" id="NP_001269915.1">
    <molecule id="Q96HR3-2"/>
    <property type="nucleotide sequence ID" value="NM_001282986.2"/>
</dbReference>
<dbReference type="RefSeq" id="NP_542382.1">
    <molecule id="Q96HR3-1"/>
    <property type="nucleotide sequence ID" value="NM_080651.4"/>
</dbReference>
<dbReference type="PDB" id="7EMF">
    <property type="method" value="EM"/>
    <property type="resolution" value="3.50 A"/>
    <property type="chains" value="3=1-178"/>
</dbReference>
<dbReference type="PDB" id="7ENA">
    <property type="method" value="EM"/>
    <property type="resolution" value="4.07 A"/>
    <property type="chains" value="l=1-178"/>
</dbReference>
<dbReference type="PDB" id="7ENC">
    <property type="method" value="EM"/>
    <property type="resolution" value="4.13 A"/>
    <property type="chains" value="l=1-178"/>
</dbReference>
<dbReference type="PDB" id="7ENJ">
    <property type="method" value="EM"/>
    <property type="resolution" value="4.40 A"/>
    <property type="chains" value="3=1-178"/>
</dbReference>
<dbReference type="PDB" id="7LBM">
    <property type="method" value="EM"/>
    <property type="resolution" value="4.80 A"/>
    <property type="chains" value="q=1-178"/>
</dbReference>
<dbReference type="PDB" id="7NVR">
    <property type="method" value="EM"/>
    <property type="resolution" value="4.50 A"/>
    <property type="chains" value="s=1-178"/>
</dbReference>
<dbReference type="PDB" id="8GXQ">
    <property type="method" value="EM"/>
    <property type="resolution" value="5.04 A"/>
    <property type="chains" value="l=1-178"/>
</dbReference>
<dbReference type="PDB" id="8GXS">
    <property type="method" value="EM"/>
    <property type="resolution" value="4.16 A"/>
    <property type="chains" value="l=1-178"/>
</dbReference>
<dbReference type="PDB" id="8T9D">
    <property type="method" value="EM"/>
    <property type="resolution" value="4.66 A"/>
    <property type="chains" value="Y=1-178"/>
</dbReference>
<dbReference type="PDB" id="8TQW">
    <property type="method" value="EM"/>
    <property type="resolution" value="8.20 A"/>
    <property type="chains" value="3=1-178"/>
</dbReference>
<dbReference type="PDB" id="8TRH">
    <property type="method" value="EM"/>
    <property type="resolution" value="3.70 A"/>
    <property type="chains" value="3=1-178"/>
</dbReference>
<dbReference type="PDBsum" id="7EMF"/>
<dbReference type="PDBsum" id="7ENA"/>
<dbReference type="PDBsum" id="7ENC"/>
<dbReference type="PDBsum" id="7ENJ"/>
<dbReference type="PDBsum" id="7LBM"/>
<dbReference type="PDBsum" id="7NVR"/>
<dbReference type="PDBsum" id="8GXQ"/>
<dbReference type="PDBsum" id="8GXS"/>
<dbReference type="PDBsum" id="8T9D"/>
<dbReference type="PDBsum" id="8TQW"/>
<dbReference type="PDBsum" id="8TRH"/>
<dbReference type="EMDB" id="EMD-12610"/>
<dbReference type="EMDB" id="EMD-23255"/>
<dbReference type="EMDB" id="EMD-31191"/>
<dbReference type="EMDB" id="EMD-31204"/>
<dbReference type="EMDB" id="EMD-31207"/>
<dbReference type="EMDB" id="EMD-31211"/>
<dbReference type="EMDB" id="EMD-34359"/>
<dbReference type="EMDB" id="EMD-34360"/>
<dbReference type="EMDB" id="EMD-41107"/>
<dbReference type="EMDB" id="EMD-41565"/>
<dbReference type="EMDB" id="EMD-41580"/>
<dbReference type="SMR" id="Q96HR3"/>
<dbReference type="BioGRID" id="124707">
    <property type="interactions" value="85"/>
</dbReference>
<dbReference type="ComplexPortal" id="CPX-3227">
    <property type="entry name" value="Core mediator complex"/>
</dbReference>
<dbReference type="CORUM" id="Q96HR3"/>
<dbReference type="FunCoup" id="Q96HR3">
    <property type="interactions" value="3235"/>
</dbReference>
<dbReference type="IntAct" id="Q96HR3">
    <property type="interactions" value="65"/>
</dbReference>
<dbReference type="MINT" id="Q96HR3"/>
<dbReference type="STRING" id="9606.ENSP00000297347"/>
<dbReference type="GlyGen" id="Q96HR3">
    <property type="glycosylation" value="1 site, 1 O-linked glycan (1 site)"/>
</dbReference>
<dbReference type="iPTMnet" id="Q96HR3"/>
<dbReference type="PhosphoSitePlus" id="Q96HR3"/>
<dbReference type="BioMuta" id="MED30"/>
<dbReference type="DMDM" id="74731968"/>
<dbReference type="jPOST" id="Q96HR3"/>
<dbReference type="MassIVE" id="Q96HR3"/>
<dbReference type="PaxDb" id="9606-ENSP00000297347"/>
<dbReference type="PeptideAtlas" id="Q96HR3"/>
<dbReference type="ProteomicsDB" id="7605"/>
<dbReference type="ProteomicsDB" id="76778">
    <molecule id="Q96HR3-1"/>
</dbReference>
<dbReference type="Pumba" id="Q96HR3"/>
<dbReference type="Antibodypedia" id="26728">
    <property type="antibodies" value="194 antibodies from 25 providers"/>
</dbReference>
<dbReference type="DNASU" id="90390"/>
<dbReference type="Ensembl" id="ENST00000297347.7">
    <molecule id="Q96HR3-1"/>
    <property type="protein sequence ID" value="ENSP00000297347.3"/>
    <property type="gene ID" value="ENSG00000164758.7"/>
</dbReference>
<dbReference type="Ensembl" id="ENST00000522839.1">
    <molecule id="Q96HR3-2"/>
    <property type="protein sequence ID" value="ENSP00000431051.1"/>
    <property type="gene ID" value="ENSG00000164758.7"/>
</dbReference>
<dbReference type="GeneID" id="90390"/>
<dbReference type="KEGG" id="hsa:90390"/>
<dbReference type="MANE-Select" id="ENST00000297347.7">
    <property type="protein sequence ID" value="ENSP00000297347.3"/>
    <property type="RefSeq nucleotide sequence ID" value="NM_080651.4"/>
    <property type="RefSeq protein sequence ID" value="NP_542382.1"/>
</dbReference>
<dbReference type="UCSC" id="uc003yoj.4">
    <molecule id="Q96HR3-1"/>
    <property type="organism name" value="human"/>
</dbReference>
<dbReference type="AGR" id="HGNC:23032"/>
<dbReference type="CTD" id="90390"/>
<dbReference type="DisGeNET" id="90390"/>
<dbReference type="GeneCards" id="MED30"/>
<dbReference type="HGNC" id="HGNC:23032">
    <property type="gene designation" value="MED30"/>
</dbReference>
<dbReference type="HPA" id="ENSG00000164758">
    <property type="expression patterns" value="Low tissue specificity"/>
</dbReference>
<dbReference type="MIM" id="610237">
    <property type="type" value="gene"/>
</dbReference>
<dbReference type="neXtProt" id="NX_Q96HR3"/>
<dbReference type="OpenTargets" id="ENSG00000164758"/>
<dbReference type="PharmGKB" id="PA162395656"/>
<dbReference type="VEuPathDB" id="HostDB:ENSG00000164758"/>
<dbReference type="eggNOG" id="ENOG502QV3C">
    <property type="taxonomic scope" value="Eukaryota"/>
</dbReference>
<dbReference type="GeneTree" id="ENSGT00390000010887"/>
<dbReference type="HOGENOM" id="CLU_074190_1_1_1"/>
<dbReference type="InParanoid" id="Q96HR3"/>
<dbReference type="OMA" id="IWDVNAM"/>
<dbReference type="OrthoDB" id="10067025at2759"/>
<dbReference type="PAN-GO" id="Q96HR3">
    <property type="GO annotations" value="3 GO annotations based on evolutionary models"/>
</dbReference>
<dbReference type="PhylomeDB" id="Q96HR3"/>
<dbReference type="TreeFam" id="TF324588"/>
<dbReference type="PathwayCommons" id="Q96HR3"/>
<dbReference type="Reactome" id="R-HSA-1989781">
    <property type="pathway name" value="PPARA activates gene expression"/>
</dbReference>
<dbReference type="Reactome" id="R-HSA-212436">
    <property type="pathway name" value="Generic Transcription Pathway"/>
</dbReference>
<dbReference type="Reactome" id="R-HSA-381340">
    <property type="pathway name" value="Transcriptional regulation of white adipocyte differentiation"/>
</dbReference>
<dbReference type="Reactome" id="R-HSA-9833110">
    <property type="pathway name" value="RSV-host interactions"/>
</dbReference>
<dbReference type="Reactome" id="R-HSA-9841922">
    <property type="pathway name" value="MLL4 and MLL3 complexes regulate expression of PPARG target genes in adipogenesis and hepatic steatosis"/>
</dbReference>
<dbReference type="SignaLink" id="Q96HR3"/>
<dbReference type="SIGNOR" id="Q96HR3"/>
<dbReference type="BioGRID-ORCS" id="90390">
    <property type="hits" value="813 hits in 1169 CRISPR screens"/>
</dbReference>
<dbReference type="ChiTaRS" id="MED30">
    <property type="organism name" value="human"/>
</dbReference>
<dbReference type="GeneWiki" id="MED30"/>
<dbReference type="GenomeRNAi" id="90390"/>
<dbReference type="Pharos" id="Q96HR3">
    <property type="development level" value="Tbio"/>
</dbReference>
<dbReference type="PRO" id="PR:Q96HR3"/>
<dbReference type="Proteomes" id="UP000005640">
    <property type="component" value="Chromosome 8"/>
</dbReference>
<dbReference type="RNAct" id="Q96HR3">
    <property type="molecule type" value="protein"/>
</dbReference>
<dbReference type="Bgee" id="ENSG00000164758">
    <property type="expression patterns" value="Expressed in oocyte and 190 other cell types or tissues"/>
</dbReference>
<dbReference type="GO" id="GO:0070847">
    <property type="term" value="C:core mediator complex"/>
    <property type="evidence" value="ECO:0000353"/>
    <property type="project" value="ComplexPortal"/>
</dbReference>
<dbReference type="GO" id="GO:0016592">
    <property type="term" value="C:mediator complex"/>
    <property type="evidence" value="ECO:0000314"/>
    <property type="project" value="UniProtKB"/>
</dbReference>
<dbReference type="GO" id="GO:0005654">
    <property type="term" value="C:nucleoplasm"/>
    <property type="evidence" value="ECO:0000304"/>
    <property type="project" value="Reactome"/>
</dbReference>
<dbReference type="GO" id="GO:0005634">
    <property type="term" value="C:nucleus"/>
    <property type="evidence" value="ECO:0000314"/>
    <property type="project" value="UniProtKB"/>
</dbReference>
<dbReference type="GO" id="GO:0000151">
    <property type="term" value="C:ubiquitin ligase complex"/>
    <property type="evidence" value="ECO:0007669"/>
    <property type="project" value="Ensembl"/>
</dbReference>
<dbReference type="GO" id="GO:0046966">
    <property type="term" value="F:nuclear thyroid hormone receptor binding"/>
    <property type="evidence" value="ECO:0000314"/>
    <property type="project" value="UniProtKB"/>
</dbReference>
<dbReference type="GO" id="GO:0042809">
    <property type="term" value="F:nuclear vitamin D receptor binding"/>
    <property type="evidence" value="ECO:0000303"/>
    <property type="project" value="UniProtKB"/>
</dbReference>
<dbReference type="GO" id="GO:0003713">
    <property type="term" value="F:transcription coactivator activity"/>
    <property type="evidence" value="ECO:0000314"/>
    <property type="project" value="UniProtKB"/>
</dbReference>
<dbReference type="GO" id="GO:0003712">
    <property type="term" value="F:transcription coregulator activity"/>
    <property type="evidence" value="ECO:0000314"/>
    <property type="project" value="UniProtKB"/>
</dbReference>
<dbReference type="GO" id="GO:0061630">
    <property type="term" value="F:ubiquitin protein ligase activity"/>
    <property type="evidence" value="ECO:0007669"/>
    <property type="project" value="Ensembl"/>
</dbReference>
<dbReference type="GO" id="GO:0045893">
    <property type="term" value="P:positive regulation of DNA-templated transcription"/>
    <property type="evidence" value="ECO:0000314"/>
    <property type="project" value="UniProtKB"/>
</dbReference>
<dbReference type="GO" id="GO:0032968">
    <property type="term" value="P:positive regulation of transcription elongation by RNA polymerase II"/>
    <property type="evidence" value="ECO:0000303"/>
    <property type="project" value="ComplexPortal"/>
</dbReference>
<dbReference type="GO" id="GO:0060261">
    <property type="term" value="P:positive regulation of transcription initiation by RNA polymerase II"/>
    <property type="evidence" value="ECO:0000314"/>
    <property type="project" value="UniProtKB"/>
</dbReference>
<dbReference type="GO" id="GO:0016567">
    <property type="term" value="P:protein ubiquitination"/>
    <property type="evidence" value="ECO:0007669"/>
    <property type="project" value="Ensembl"/>
</dbReference>
<dbReference type="GO" id="GO:0051123">
    <property type="term" value="P:RNA polymerase II preinitiation complex assembly"/>
    <property type="evidence" value="ECO:0000303"/>
    <property type="project" value="ComplexPortal"/>
</dbReference>
<dbReference type="GO" id="GO:0035019">
    <property type="term" value="P:somatic stem cell population maintenance"/>
    <property type="evidence" value="ECO:0007669"/>
    <property type="project" value="Ensembl"/>
</dbReference>
<dbReference type="InterPro" id="IPR021019">
    <property type="entry name" value="Mediator_Med30_met"/>
</dbReference>
<dbReference type="PANTHER" id="PTHR31705">
    <property type="entry name" value="MEDIATOR OF RNA POLYMERASE II TRANSCRIPTION SUBUNIT 30"/>
    <property type="match status" value="1"/>
</dbReference>
<dbReference type="PANTHER" id="PTHR31705:SF4">
    <property type="entry name" value="MEDIATOR OF RNA POLYMERASE II TRANSCRIPTION SUBUNIT 30"/>
    <property type="match status" value="1"/>
</dbReference>
<dbReference type="Pfam" id="PF11315">
    <property type="entry name" value="Med30"/>
    <property type="match status" value="1"/>
</dbReference>
<sequence>MSTPPLAASGMAPGPFAGPQAQQAAREVNTASLCRIGQETVQDIVYRTMEIFQLLRNMQLPNGVTYHTGTYQDRLTKLQDNLRQLSVLFRKLRLVYDKCNENCGGMDPIPVEQLIPYVEEDGSKNDDRAGPPRFASEERREIAEVNKKLKQKNQQLKQIMDQLRNLIWDINAMLAMRN</sequence>
<name>MED30_HUMAN</name>
<comment type="function">
    <text evidence="3 6">Component of the Mediator complex, a coactivator involved in the regulated transcription of nearly all RNA polymerase II-dependent genes. Mediator functions as a bridge to convey information from gene-specific regulatory proteins to the basal RNA polymerase II transcription machinery. Mediator is recruited to promoters by direct interactions with regulatory proteins and serves as a scaffold for the assembly of a functional preinitiation complex with RNA polymerase II and the general transcription factors.</text>
</comment>
<comment type="subunit">
    <text evidence="3 4 5">Component of the Mediator complex, which is composed of MED1, MED4, MED6, MED7, MED8, MED9, MED10, MED11, MED12, MED13, MED13L, MED14, MED15, MED16, MED17, MED18, MED19, MED20, MED21, MED22, MED23, MED24, MED25, MED26, MED27, MED29, MED30, MED31, CCNC, CDK8 and CDC2L6/CDK11. The MED12, MED13, CCNC and CDK8 subunits form a distinct module termed the CDK8 module. Mediator containing the CDK8 module is less active than Mediator lacking this module in supporting transcriptional activation. Individual preparations of the Mediator complex lacking one or more distinct subunits have been variously termed ARC, CRSP, DRIP, PC2, SMCC and TRAP.</text>
</comment>
<comment type="interaction">
    <interactant intactId="EBI-394659">
        <id>Q96HR3</id>
    </interactant>
    <interactant intactId="EBI-10174653">
        <id>Q8NF50-2</id>
        <label>DOCK8</label>
    </interactant>
    <organismsDiffer>false</organismsDiffer>
    <experiments>3</experiments>
</comment>
<comment type="interaction">
    <interactant intactId="EBI-394659">
        <id>Q96HR3</id>
    </interactant>
    <interactant intactId="EBI-740220">
        <id>O14964</id>
        <label>HGS</label>
    </interactant>
    <organismsDiffer>false</organismsDiffer>
    <experiments>5</experiments>
</comment>
<comment type="interaction">
    <interactant intactId="EBI-394659">
        <id>Q96HR3</id>
    </interactant>
    <interactant intactId="EBI-466029">
        <id>P42858</id>
        <label>HTT</label>
    </interactant>
    <organismsDiffer>false</organismsDiffer>
    <experiments>3</experiments>
</comment>
<comment type="interaction">
    <interactant intactId="EBI-394659">
        <id>Q96HR3</id>
    </interactant>
    <interactant intactId="EBI-9091197">
        <id>Q8IY31-3</id>
        <label>IFT20</label>
    </interactant>
    <organismsDiffer>false</organismsDiffer>
    <experiments>3</experiments>
</comment>
<comment type="interaction">
    <interactant intactId="EBI-394659">
        <id>Q96HR3</id>
    </interactant>
    <interactant intactId="EBI-10172052">
        <id>P60411</id>
        <label>KRTAP10-9</label>
    </interactant>
    <organismsDiffer>false</organismsDiffer>
    <experiments>3</experiments>
</comment>
<comment type="interaction">
    <interactant intactId="EBI-394659">
        <id>Q96HR3</id>
    </interactant>
    <interactant intactId="EBI-514199">
        <id>Q9H204</id>
        <label>MED28</label>
    </interactant>
    <organismsDiffer>false</organismsDiffer>
    <experiments>9</experiments>
</comment>
<comment type="interaction">
    <interactant intactId="EBI-394659">
        <id>Q96HR3</id>
    </interactant>
    <interactant intactId="EBI-3911716">
        <id>Q9ULW6</id>
        <label>NAP1L2</label>
    </interactant>
    <organismsDiffer>false</organismsDiffer>
    <experiments>3</experiments>
</comment>
<comment type="interaction">
    <interactant intactId="EBI-394659">
        <id>Q96HR3</id>
    </interactant>
    <interactant intactId="EBI-744782">
        <id>Q9Y5B8</id>
        <label>NME7</label>
    </interactant>
    <organismsDiffer>false</organismsDiffer>
    <experiments>5</experiments>
</comment>
<comment type="interaction">
    <interactant intactId="EBI-394659">
        <id>Q96HR3</id>
    </interactant>
    <interactant intactId="EBI-6423624">
        <id>Q9Y6S9</id>
        <label>RPS6KL1</label>
    </interactant>
    <organismsDiffer>false</organismsDiffer>
    <experiments>2</experiments>
</comment>
<comment type="subcellular location">
    <subcellularLocation>
        <location evidence="8">Nucleus</location>
    </subcellularLocation>
</comment>
<comment type="alternative products">
    <event type="alternative splicing"/>
    <isoform>
        <id>Q96HR3-1</id>
        <name>1</name>
        <sequence type="displayed"/>
    </isoform>
    <isoform>
        <id>Q96HR3-2</id>
        <name>2</name>
        <sequence type="described" ref="VSP_053904"/>
    </isoform>
</comment>
<comment type="tissue specificity">
    <text evidence="3">Expressed in brain, heart, kidney, liver, lung, pancreas, placenta and skeletal muscle.</text>
</comment>
<comment type="similarity">
    <text evidence="8">Belongs to the Mediator complex subunit 30 family.</text>
</comment>
<organism>
    <name type="scientific">Homo sapiens</name>
    <name type="common">Human</name>
    <dbReference type="NCBI Taxonomy" id="9606"/>
    <lineage>
        <taxon>Eukaryota</taxon>
        <taxon>Metazoa</taxon>
        <taxon>Chordata</taxon>
        <taxon>Craniata</taxon>
        <taxon>Vertebrata</taxon>
        <taxon>Euteleostomi</taxon>
        <taxon>Mammalia</taxon>
        <taxon>Eutheria</taxon>
        <taxon>Euarchontoglires</taxon>
        <taxon>Primates</taxon>
        <taxon>Haplorrhini</taxon>
        <taxon>Catarrhini</taxon>
        <taxon>Hominidae</taxon>
        <taxon>Homo</taxon>
    </lineage>
</organism>
<accession>Q96HR3</accession>
<accession>C6GKU9</accession>
<reference key="1">
    <citation type="journal article" date="2002" name="Mol. Cell. Biol.">
        <title>Requirement of TRAP/mediator for both activator-independent and activator-dependent transcription in conjunction with TFIID-associated TAF(II)s.</title>
        <authorList>
            <person name="Baek H.J."/>
            <person name="Malik S."/>
            <person name="Qin J."/>
            <person name="Roeder R.G."/>
        </authorList>
    </citation>
    <scope>NUCLEOTIDE SEQUENCE [MRNA] (ISOFORM 1)</scope>
    <scope>IDENTIFICATION BY MASS SPECTROMETRY</scope>
    <scope>IDENTIFICATION IN THE MEDIATOR COMPLEX</scope>
    <scope>FUNCTION</scope>
    <scope>TISSUE SPECIFICITY</scope>
</reference>
<reference key="2">
    <citation type="submission" date="2008-07" db="EMBL/GenBank/DDBJ databases">
        <title>Identification of MED30 alternative mRNA in human progenitor cells.</title>
        <authorList>
            <person name="Rienzo M."/>
            <person name="Casamassimi A."/>
            <person name="Giovane A."/>
            <person name="Napoli C."/>
        </authorList>
    </citation>
    <scope>NUCLEOTIDE SEQUENCE [MRNA] (ISOFORM 2)</scope>
    <scope>ALTERNATIVE SPLICING</scope>
    <source>
        <tissue>Bone marrow</tissue>
        <tissue>Peripheral blood</tissue>
    </source>
</reference>
<reference key="3">
    <citation type="journal article" date="2006" name="Nature">
        <title>DNA sequence and analysis of human chromosome 8.</title>
        <authorList>
            <person name="Nusbaum C."/>
            <person name="Mikkelsen T.S."/>
            <person name="Zody M.C."/>
            <person name="Asakawa S."/>
            <person name="Taudien S."/>
            <person name="Garber M."/>
            <person name="Kodira C.D."/>
            <person name="Schueler M.G."/>
            <person name="Shimizu A."/>
            <person name="Whittaker C.A."/>
            <person name="Chang J.L."/>
            <person name="Cuomo C.A."/>
            <person name="Dewar K."/>
            <person name="FitzGerald M.G."/>
            <person name="Yang X."/>
            <person name="Allen N.R."/>
            <person name="Anderson S."/>
            <person name="Asakawa T."/>
            <person name="Blechschmidt K."/>
            <person name="Bloom T."/>
            <person name="Borowsky M.L."/>
            <person name="Butler J."/>
            <person name="Cook A."/>
            <person name="Corum B."/>
            <person name="DeArellano K."/>
            <person name="DeCaprio D."/>
            <person name="Dooley K.T."/>
            <person name="Dorris L. III"/>
            <person name="Engels R."/>
            <person name="Gloeckner G."/>
            <person name="Hafez N."/>
            <person name="Hagopian D.S."/>
            <person name="Hall J.L."/>
            <person name="Ishikawa S.K."/>
            <person name="Jaffe D.B."/>
            <person name="Kamat A."/>
            <person name="Kudoh J."/>
            <person name="Lehmann R."/>
            <person name="Lokitsang T."/>
            <person name="Macdonald P."/>
            <person name="Major J.E."/>
            <person name="Matthews C.D."/>
            <person name="Mauceli E."/>
            <person name="Menzel U."/>
            <person name="Mihalev A.H."/>
            <person name="Minoshima S."/>
            <person name="Murayama Y."/>
            <person name="Naylor J.W."/>
            <person name="Nicol R."/>
            <person name="Nguyen C."/>
            <person name="O'Leary S.B."/>
            <person name="O'Neill K."/>
            <person name="Parker S.C.J."/>
            <person name="Polley A."/>
            <person name="Raymond C.K."/>
            <person name="Reichwald K."/>
            <person name="Rodriguez J."/>
            <person name="Sasaki T."/>
            <person name="Schilhabel M."/>
            <person name="Siddiqui R."/>
            <person name="Smith C.L."/>
            <person name="Sneddon T.P."/>
            <person name="Talamas J.A."/>
            <person name="Tenzin P."/>
            <person name="Topham K."/>
            <person name="Venkataraman V."/>
            <person name="Wen G."/>
            <person name="Yamazaki S."/>
            <person name="Young S.K."/>
            <person name="Zeng Q."/>
            <person name="Zimmer A.R."/>
            <person name="Rosenthal A."/>
            <person name="Birren B.W."/>
            <person name="Platzer M."/>
            <person name="Shimizu N."/>
            <person name="Lander E.S."/>
        </authorList>
    </citation>
    <scope>NUCLEOTIDE SEQUENCE [LARGE SCALE GENOMIC DNA]</scope>
</reference>
<reference key="4">
    <citation type="journal article" date="2004" name="Genome Res.">
        <title>The status, quality, and expansion of the NIH full-length cDNA project: the Mammalian Gene Collection (MGC).</title>
        <authorList>
            <consortium name="The MGC Project Team"/>
        </authorList>
    </citation>
    <scope>NUCLEOTIDE SEQUENCE [LARGE SCALE MRNA] (ISOFORM 1)</scope>
    <source>
        <tissue>Eye</tissue>
    </source>
</reference>
<reference key="5">
    <citation type="journal article" date="2003" name="J. Biol. Chem.">
        <title>Identification of mammalian Mediator subunits with similarities to yeast Mediator subunits Srb5, Srb6, Med11, and Rox3.</title>
        <authorList>
            <person name="Sato S."/>
            <person name="Tomomori-Sato C."/>
            <person name="Banks C.A.S."/>
            <person name="Sorokina I."/>
            <person name="Parmely T.J."/>
            <person name="Kong S.E."/>
            <person name="Jin J."/>
            <person name="Cai Y."/>
            <person name="Lane W.S."/>
            <person name="Brower C.S."/>
            <person name="Conaway R.C."/>
            <person name="Conaway J.W."/>
        </authorList>
    </citation>
    <scope>INTERACTION WITH MED22</scope>
</reference>
<reference key="6">
    <citation type="journal article" date="2004" name="Mol. Cell">
        <title>A set of consensus mammalian mediator subunits identified by multidimensional protein identification technology.</title>
        <authorList>
            <person name="Sato S."/>
            <person name="Tomomori-Sato C."/>
            <person name="Parmely T.J."/>
            <person name="Florens L."/>
            <person name="Zybailov B."/>
            <person name="Swanson S.K."/>
            <person name="Banks C.A.S."/>
            <person name="Jin J."/>
            <person name="Cai Y."/>
            <person name="Washburn M.P."/>
            <person name="Conaway J.W."/>
            <person name="Conaway R.C."/>
        </authorList>
    </citation>
    <scope>IDENTIFICATION BY MASS SPECTROMETRY</scope>
    <scope>IDENTIFICATION IN THE MEDIATOR COMPLEX</scope>
</reference>
<reference key="7">
    <citation type="journal article" date="2005" name="Mol. Cell">
        <title>MED1/TRAP220 exists predominantly in a TRAP/Mediator subpopulation enriched in RNA polymerase II and is required for ER-mediated transcription.</title>
        <authorList>
            <person name="Zhang X."/>
            <person name="Krutchinsky A."/>
            <person name="Fukuda A."/>
            <person name="Chen W."/>
            <person name="Yamamura S."/>
            <person name="Chait B.T."/>
            <person name="Roeder R.G."/>
        </authorList>
    </citation>
    <scope>INTERACTION WITH MED1; MED6; MED12; MED13; MED16; MED17; MED20; MED21 AND MED24</scope>
    <scope>IDENTIFICATION BY MASS SPECTROMETRY</scope>
    <scope>IDENTIFICATION IN THE MEDIATOR COMPLEX</scope>
    <scope>ASSOCIATION OF THE MEDIATOR COMPLEX WITH RNA POLYMERASE II</scope>
</reference>
<reference key="8">
    <citation type="journal article" date="2006" name="J. Biol. Chem.">
        <title>Human Mediator enhances basal transcription by facilitating recruitment of transcription factor IIB during preinitiation complex assembly.</title>
        <authorList>
            <person name="Baek H.J."/>
            <person name="Kang Y.K."/>
            <person name="Roeder R.G."/>
        </authorList>
    </citation>
    <scope>FUNCTION</scope>
    <scope>INTERACTION WITH MED1 AND MED10</scope>
</reference>
<reference key="9">
    <citation type="journal article" date="2008" name="Mol. Cell">
        <title>Kinase-selective enrichment enables quantitative phosphoproteomics of the kinome across the cell cycle.</title>
        <authorList>
            <person name="Daub H."/>
            <person name="Olsen J.V."/>
            <person name="Bairlein M."/>
            <person name="Gnad F."/>
            <person name="Oppermann F.S."/>
            <person name="Korner R."/>
            <person name="Greff Z."/>
            <person name="Keri G."/>
            <person name="Stemmann O."/>
            <person name="Mann M."/>
        </authorList>
    </citation>
    <scope>IDENTIFICATION BY MASS SPECTROMETRY [LARGE SCALE ANALYSIS]</scope>
    <source>
        <tissue>Cervix carcinoma</tissue>
    </source>
</reference>
<reference key="10">
    <citation type="journal article" date="2009" name="Anal. Chem.">
        <title>Lys-N and trypsin cover complementary parts of the phosphoproteome in a refined SCX-based approach.</title>
        <authorList>
            <person name="Gauci S."/>
            <person name="Helbig A.O."/>
            <person name="Slijper M."/>
            <person name="Krijgsveld J."/>
            <person name="Heck A.J."/>
            <person name="Mohammed S."/>
        </authorList>
    </citation>
    <scope>ACETYLATION [LARGE SCALE ANALYSIS] AT SER-2</scope>
    <scope>CLEAVAGE OF INITIATOR METHIONINE [LARGE SCALE ANALYSIS]</scope>
    <scope>IDENTIFICATION BY MASS SPECTROMETRY [LARGE SCALE ANALYSIS]</scope>
</reference>
<reference key="11">
    <citation type="journal article" date="2009" name="Mol. Cell. Proteomics">
        <title>Large-scale proteomics analysis of the human kinome.</title>
        <authorList>
            <person name="Oppermann F.S."/>
            <person name="Gnad F."/>
            <person name="Olsen J.V."/>
            <person name="Hornberger R."/>
            <person name="Greff Z."/>
            <person name="Keri G."/>
            <person name="Mann M."/>
            <person name="Daub H."/>
        </authorList>
    </citation>
    <scope>ACETYLATION [LARGE SCALE ANALYSIS] AT SER-2</scope>
    <scope>CLEAVAGE OF INITIATOR METHIONINE [LARGE SCALE ANALYSIS]</scope>
    <scope>IDENTIFICATION BY MASS SPECTROMETRY [LARGE SCALE ANALYSIS]</scope>
</reference>
<reference key="12">
    <citation type="journal article" date="2011" name="Sci. Signal.">
        <title>System-wide temporal characterization of the proteome and phosphoproteome of human embryonic stem cell differentiation.</title>
        <authorList>
            <person name="Rigbolt K.T."/>
            <person name="Prokhorova T.A."/>
            <person name="Akimov V."/>
            <person name="Henningsen J."/>
            <person name="Johansen P.T."/>
            <person name="Kratchmarova I."/>
            <person name="Kassem M."/>
            <person name="Mann M."/>
            <person name="Olsen J.V."/>
            <person name="Blagoev B."/>
        </authorList>
    </citation>
    <scope>ACETYLATION [LARGE SCALE ANALYSIS] AT SER-2</scope>
    <scope>CLEAVAGE OF INITIATOR METHIONINE [LARGE SCALE ANALYSIS]</scope>
    <scope>IDENTIFICATION BY MASS SPECTROMETRY [LARGE SCALE ANALYSIS]</scope>
</reference>
<reference key="13">
    <citation type="journal article" date="2012" name="Proc. Natl. Acad. Sci. U.S.A.">
        <title>N-terminal acetylome analyses and functional insights of the N-terminal acetyltransferase NatB.</title>
        <authorList>
            <person name="Van Damme P."/>
            <person name="Lasa M."/>
            <person name="Polevoda B."/>
            <person name="Gazquez C."/>
            <person name="Elosegui-Artola A."/>
            <person name="Kim D.S."/>
            <person name="De Juan-Pardo E."/>
            <person name="Demeyer K."/>
            <person name="Hole K."/>
            <person name="Larrea E."/>
            <person name="Timmerman E."/>
            <person name="Prieto J."/>
            <person name="Arnesen T."/>
            <person name="Sherman F."/>
            <person name="Gevaert K."/>
            <person name="Aldabe R."/>
        </authorList>
    </citation>
    <scope>ACETYLATION [LARGE SCALE ANALYSIS] AT SER-2</scope>
    <scope>CLEAVAGE OF INITIATOR METHIONINE [LARGE SCALE ANALYSIS]</scope>
    <scope>IDENTIFICATION BY MASS SPECTROMETRY [LARGE SCALE ANALYSIS]</scope>
</reference>
<reference key="14">
    <citation type="journal article" date="2013" name="J. Proteome Res.">
        <title>Toward a comprehensive characterization of a human cancer cell phosphoproteome.</title>
        <authorList>
            <person name="Zhou H."/>
            <person name="Di Palma S."/>
            <person name="Preisinger C."/>
            <person name="Peng M."/>
            <person name="Polat A.N."/>
            <person name="Heck A.J."/>
            <person name="Mohammed S."/>
        </authorList>
    </citation>
    <scope>IDENTIFICATION BY MASS SPECTROMETRY [LARGE SCALE ANALYSIS]</scope>
    <source>
        <tissue>Erythroleukemia</tissue>
    </source>
</reference>
<protein>
    <recommendedName>
        <fullName>Mediator of RNA polymerase II transcription subunit 30</fullName>
    </recommendedName>
    <alternativeName>
        <fullName>Mediator complex subunit 30</fullName>
    </alternativeName>
    <alternativeName>
        <fullName>TRAP/Mediator complex component TRAP25</fullName>
    </alternativeName>
    <alternativeName>
        <fullName>Thyroid hormone receptor-associated protein 6</fullName>
    </alternativeName>
    <alternativeName>
        <fullName>Thyroid hormone receptor-associated protein complex 25 kDa component</fullName>
        <shortName>Trap25</shortName>
    </alternativeName>
</protein>
<proteinExistence type="evidence at protein level"/>
<evidence type="ECO:0000255" key="1"/>
<evidence type="ECO:0000256" key="2">
    <source>
        <dbReference type="SAM" id="MobiDB-lite"/>
    </source>
</evidence>
<evidence type="ECO:0000269" key="3">
    <source>
    </source>
</evidence>
<evidence type="ECO:0000269" key="4">
    <source>
    </source>
</evidence>
<evidence type="ECO:0000269" key="5">
    <source>
    </source>
</evidence>
<evidence type="ECO:0000269" key="6">
    <source>
    </source>
</evidence>
<evidence type="ECO:0000303" key="7">
    <source ref="2"/>
</evidence>
<evidence type="ECO:0000305" key="8"/>
<evidence type="ECO:0007744" key="9">
    <source>
    </source>
</evidence>
<evidence type="ECO:0007744" key="10">
    <source>
    </source>
</evidence>
<evidence type="ECO:0007744" key="11">
    <source>
    </source>
</evidence>
<evidence type="ECO:0007744" key="12">
    <source>
    </source>
</evidence>
<evidence type="ECO:0007829" key="13">
    <source>
        <dbReference type="PDB" id="7EMF"/>
    </source>
</evidence>
<keyword id="KW-0002">3D-structure</keyword>
<keyword id="KW-0007">Acetylation</keyword>
<keyword id="KW-0010">Activator</keyword>
<keyword id="KW-0025">Alternative splicing</keyword>
<keyword id="KW-0175">Coiled coil</keyword>
<keyword id="KW-0539">Nucleus</keyword>
<keyword id="KW-1267">Proteomics identification</keyword>
<keyword id="KW-1185">Reference proteome</keyword>
<keyword id="KW-0804">Transcription</keyword>
<keyword id="KW-0805">Transcription regulation</keyword>
<feature type="initiator methionine" description="Removed" evidence="9 10 11 12">
    <location>
        <position position="1"/>
    </location>
</feature>
<feature type="chain" id="PRO_0000239406" description="Mediator of RNA polymerase II transcription subunit 30">
    <location>
        <begin position="2"/>
        <end position="178"/>
    </location>
</feature>
<feature type="region of interest" description="Disordered" evidence="2">
    <location>
        <begin position="1"/>
        <end position="22"/>
    </location>
</feature>
<feature type="coiled-coil region" evidence="1">
    <location>
        <begin position="70"/>
        <end position="94"/>
    </location>
</feature>
<feature type="coiled-coil region" evidence="1">
    <location>
        <begin position="133"/>
        <end position="173"/>
    </location>
</feature>
<feature type="compositionally biased region" description="Low complexity" evidence="2">
    <location>
        <begin position="10"/>
        <end position="22"/>
    </location>
</feature>
<feature type="modified residue" description="N-acetylserine" evidence="9 10 11 12">
    <location>
        <position position="2"/>
    </location>
</feature>
<feature type="splice variant" id="VSP_053904" description="In isoform 2." evidence="7">
    <location>
        <begin position="113"/>
        <end position="147"/>
    </location>
</feature>
<feature type="helix" evidence="13">
    <location>
        <begin position="30"/>
        <end position="57"/>
    </location>
</feature>
<feature type="helix" evidence="13">
    <location>
        <begin position="70"/>
        <end position="101"/>
    </location>
</feature>
<feature type="strand" evidence="13">
    <location>
        <begin position="113"/>
        <end position="115"/>
    </location>
</feature>
<feature type="helix" evidence="13">
    <location>
        <begin position="137"/>
        <end position="175"/>
    </location>
</feature>
<gene>
    <name type="primary">MED30</name>
    <name type="synonym">THRAP6</name>
    <name type="synonym">TRAP25</name>
</gene>